<accession>Q0P651</accession>
<accession>A1A4W8</accession>
<accession>A1A4W9</accession>
<accession>Q9H7A7</accession>
<proteinExistence type="evidence at protein level"/>
<reference key="1">
    <citation type="journal article" date="2004" name="Nat. Genet.">
        <title>Complete sequencing and characterization of 21,243 full-length human cDNAs.</title>
        <authorList>
            <person name="Ota T."/>
            <person name="Suzuki Y."/>
            <person name="Nishikawa T."/>
            <person name="Otsuki T."/>
            <person name="Sugiyama T."/>
            <person name="Irie R."/>
            <person name="Wakamatsu A."/>
            <person name="Hayashi K."/>
            <person name="Sato H."/>
            <person name="Nagai K."/>
            <person name="Kimura K."/>
            <person name="Makita H."/>
            <person name="Sekine M."/>
            <person name="Obayashi M."/>
            <person name="Nishi T."/>
            <person name="Shibahara T."/>
            <person name="Tanaka T."/>
            <person name="Ishii S."/>
            <person name="Yamamoto J."/>
            <person name="Saito K."/>
            <person name="Kawai Y."/>
            <person name="Isono Y."/>
            <person name="Nakamura Y."/>
            <person name="Nagahari K."/>
            <person name="Murakami K."/>
            <person name="Yasuda T."/>
            <person name="Iwayanagi T."/>
            <person name="Wagatsuma M."/>
            <person name="Shiratori A."/>
            <person name="Sudo H."/>
            <person name="Hosoiri T."/>
            <person name="Kaku Y."/>
            <person name="Kodaira H."/>
            <person name="Kondo H."/>
            <person name="Sugawara M."/>
            <person name="Takahashi M."/>
            <person name="Kanda K."/>
            <person name="Yokoi T."/>
            <person name="Furuya T."/>
            <person name="Kikkawa E."/>
            <person name="Omura Y."/>
            <person name="Abe K."/>
            <person name="Kamihara K."/>
            <person name="Katsuta N."/>
            <person name="Sato K."/>
            <person name="Tanikawa M."/>
            <person name="Yamazaki M."/>
            <person name="Ninomiya K."/>
            <person name="Ishibashi T."/>
            <person name="Yamashita H."/>
            <person name="Murakawa K."/>
            <person name="Fujimori K."/>
            <person name="Tanai H."/>
            <person name="Kimata M."/>
            <person name="Watanabe M."/>
            <person name="Hiraoka S."/>
            <person name="Chiba Y."/>
            <person name="Ishida S."/>
            <person name="Ono Y."/>
            <person name="Takiguchi S."/>
            <person name="Watanabe S."/>
            <person name="Yosida M."/>
            <person name="Hotuta T."/>
            <person name="Kusano J."/>
            <person name="Kanehori K."/>
            <person name="Takahashi-Fujii A."/>
            <person name="Hara H."/>
            <person name="Tanase T.-O."/>
            <person name="Nomura Y."/>
            <person name="Togiya S."/>
            <person name="Komai F."/>
            <person name="Hara R."/>
            <person name="Takeuchi K."/>
            <person name="Arita M."/>
            <person name="Imose N."/>
            <person name="Musashino K."/>
            <person name="Yuuki H."/>
            <person name="Oshima A."/>
            <person name="Sasaki N."/>
            <person name="Aotsuka S."/>
            <person name="Yoshikawa Y."/>
            <person name="Matsunawa H."/>
            <person name="Ichihara T."/>
            <person name="Shiohata N."/>
            <person name="Sano S."/>
            <person name="Moriya S."/>
            <person name="Momiyama H."/>
            <person name="Satoh N."/>
            <person name="Takami S."/>
            <person name="Terashima Y."/>
            <person name="Suzuki O."/>
            <person name="Nakagawa S."/>
            <person name="Senoh A."/>
            <person name="Mizoguchi H."/>
            <person name="Goto Y."/>
            <person name="Shimizu F."/>
            <person name="Wakebe H."/>
            <person name="Hishigaki H."/>
            <person name="Watanabe T."/>
            <person name="Sugiyama A."/>
            <person name="Takemoto M."/>
            <person name="Kawakami B."/>
            <person name="Yamazaki M."/>
            <person name="Watanabe K."/>
            <person name="Kumagai A."/>
            <person name="Itakura S."/>
            <person name="Fukuzumi Y."/>
            <person name="Fujimori Y."/>
            <person name="Komiyama M."/>
            <person name="Tashiro H."/>
            <person name="Tanigami A."/>
            <person name="Fujiwara T."/>
            <person name="Ono T."/>
            <person name="Yamada K."/>
            <person name="Fujii Y."/>
            <person name="Ozaki K."/>
            <person name="Hirao M."/>
            <person name="Ohmori Y."/>
            <person name="Kawabata A."/>
            <person name="Hikiji T."/>
            <person name="Kobatake N."/>
            <person name="Inagaki H."/>
            <person name="Ikema Y."/>
            <person name="Okamoto S."/>
            <person name="Okitani R."/>
            <person name="Kawakami T."/>
            <person name="Noguchi S."/>
            <person name="Itoh T."/>
            <person name="Shigeta K."/>
            <person name="Senba T."/>
            <person name="Matsumura K."/>
            <person name="Nakajima Y."/>
            <person name="Mizuno T."/>
            <person name="Morinaga M."/>
            <person name="Sasaki M."/>
            <person name="Togashi T."/>
            <person name="Oyama M."/>
            <person name="Hata H."/>
            <person name="Watanabe M."/>
            <person name="Komatsu T."/>
            <person name="Mizushima-Sugano J."/>
            <person name="Satoh T."/>
            <person name="Shirai Y."/>
            <person name="Takahashi Y."/>
            <person name="Nakagawa K."/>
            <person name="Okumura K."/>
            <person name="Nagase T."/>
            <person name="Nomura N."/>
            <person name="Kikuchi H."/>
            <person name="Masuho Y."/>
            <person name="Yamashita R."/>
            <person name="Nakai K."/>
            <person name="Yada T."/>
            <person name="Nakamura Y."/>
            <person name="Ohara O."/>
            <person name="Isogai T."/>
            <person name="Sugano S."/>
        </authorList>
    </citation>
    <scope>NUCLEOTIDE SEQUENCE [LARGE SCALE MRNA] (ISOFORM 4)</scope>
    <source>
        <tissue>Coronary artery</tissue>
    </source>
</reference>
<reference key="2">
    <citation type="journal article" date="2004" name="Genome Res.">
        <title>The status, quality, and expansion of the NIH full-length cDNA project: the Mammalian Gene Collection (MGC).</title>
        <authorList>
            <consortium name="The MGC Project Team"/>
        </authorList>
    </citation>
    <scope>NUCLEOTIDE SEQUENCE [LARGE SCALE MRNA] (ISOFORMS 1; 2 AND 3)</scope>
    <source>
        <tissue>Lymph</tissue>
    </source>
</reference>
<organism>
    <name type="scientific">Homo sapiens</name>
    <name type="common">Human</name>
    <dbReference type="NCBI Taxonomy" id="9606"/>
    <lineage>
        <taxon>Eukaryota</taxon>
        <taxon>Metazoa</taxon>
        <taxon>Chordata</taxon>
        <taxon>Craniata</taxon>
        <taxon>Vertebrata</taxon>
        <taxon>Euteleostomi</taxon>
        <taxon>Mammalia</taxon>
        <taxon>Eutheria</taxon>
        <taxon>Euarchontoglires</taxon>
        <taxon>Primates</taxon>
        <taxon>Haplorrhini</taxon>
        <taxon>Catarrhini</taxon>
        <taxon>Hominidae</taxon>
        <taxon>Homo</taxon>
    </lineage>
</organism>
<evidence type="ECO:0000255" key="1"/>
<evidence type="ECO:0000303" key="2">
    <source>
    </source>
</evidence>
<evidence type="ECO:0000303" key="3">
    <source>
    </source>
</evidence>
<evidence type="ECO:0000305" key="4"/>
<evidence type="ECO:0000312" key="5">
    <source>
        <dbReference type="HGNC" id="HGNC:26111"/>
    </source>
</evidence>
<protein>
    <recommendedName>
        <fullName evidence="4">Protein ABHD18</fullName>
    </recommendedName>
    <alternativeName>
        <fullName evidence="4">Alpha/beta hydrolase domain-containing protein 18</fullName>
        <shortName evidence="5">Abhydrolase domain-containing protein 18</shortName>
    </alternativeName>
</protein>
<gene>
    <name evidence="5" type="primary">ABHD18</name>
    <name type="synonym">C4orf29</name>
</gene>
<comment type="subcellular location">
    <subcellularLocation>
        <location evidence="4">Secreted</location>
    </subcellularLocation>
</comment>
<comment type="alternative products">
    <event type="alternative splicing"/>
    <isoform>
        <id>Q0P651-1</id>
        <name>1</name>
        <sequence type="displayed"/>
    </isoform>
    <isoform>
        <id>Q0P651-2</id>
        <name>2</name>
        <sequence type="described" ref="VSP_027893"/>
    </isoform>
    <isoform>
        <id>Q0P651-3</id>
        <name>3</name>
        <sequence type="described" ref="VSP_027892 VSP_027894"/>
    </isoform>
    <isoform>
        <id>Q0P651-4</id>
        <name>4</name>
        <sequence type="described" ref="VSP_027891 VSP_027894"/>
    </isoform>
</comment>
<comment type="similarity">
    <text evidence="4">Belongs to the AB hydrolase superfamily.</text>
</comment>
<sequence length="414" mass="46954">MGVSKLDILYRRLLLTKLFIRGWGRPEDLKRLFEFRKMIGNRERCQNLVSSDYPVHIDKIEEQSDCKILDGHFVSPMAHYVPDIMPIESVIARFQFIVPKEWNSKYRPVCIHLAGTGDHHYWRRRTLMARPMIKEARMASLLLENPYYGCRKPKDQVRSSLKNVSDLFVMGGALVLESAALLHWLEREGYGPLGMTGISMGGHMASLAVSNWPKPMPLIPCLSWSTASGVFTTTDSFKMGQEFVKHFTSSADKLTNLNLVSRTLNLDISNQVVSQKPADCHNSSKTSVSATSEGLLLQDTSKMKRFNQTLSTNKSGYTSRNPQSYHLLSKEQSRNSLRKESLIFMKGVMDECTHVANFSVPVDPSLIIVVQAKEDAYIPRTGVRSLQEIWPGCEIRYLEGGHISAYLFKQGLFR</sequence>
<feature type="signal peptide" evidence="1">
    <location>
        <begin position="1"/>
        <end position="24"/>
    </location>
</feature>
<feature type="chain" id="PRO_0000301960" description="Protein ABHD18">
    <location>
        <begin position="25"/>
        <end position="414"/>
    </location>
</feature>
<feature type="glycosylation site" description="N-linked (GlcNAc...) asparagine" evidence="1">
    <location>
        <position position="282"/>
    </location>
</feature>
<feature type="glycosylation site" description="N-linked (GlcNAc...) asparagine" evidence="1">
    <location>
        <position position="307"/>
    </location>
</feature>
<feature type="splice variant" id="VSP_027891" description="In isoform 4." evidence="2">
    <location>
        <begin position="1"/>
        <end position="203"/>
    </location>
</feature>
<feature type="splice variant" id="VSP_027892" description="In isoform 3." evidence="3">
    <location>
        <begin position="1"/>
        <end position="127"/>
    </location>
</feature>
<feature type="splice variant" id="VSP_027893" description="In isoform 2." evidence="3">
    <original>MGVSKLDILYRRLLLTKLFIRGWGRPEDLKRLFEFRKMIGNRERCQNLVSSDYPVHIDKIEEQSDCKILDGHFVSPMAHYVPDIMPIESVIARF</original>
    <variation>MLDTNLILLPLF</variation>
    <location>
        <begin position="1"/>
        <end position="94"/>
    </location>
</feature>
<feature type="splice variant" id="VSP_027894" description="In isoform 3 and isoform 4." evidence="2 3">
    <original>T</original>
    <variation>TGVLSKSINWRELEKQYYTQTVYEEEIIHMLEYCG</variation>
    <location>
        <position position="233"/>
    </location>
</feature>
<feature type="sequence conflict" description="In Ref. 1; BAB14990." evidence="4" ref="1">
    <original>S</original>
    <variation>P</variation>
    <location sequence="Q0P651-4">
        <position position="36"/>
    </location>
</feature>
<dbReference type="EMBL" id="AK024759">
    <property type="protein sequence ID" value="BAB14990.1"/>
    <property type="molecule type" value="mRNA"/>
</dbReference>
<dbReference type="EMBL" id="BC034253">
    <property type="protein sequence ID" value="AAH34253.1"/>
    <property type="molecule type" value="mRNA"/>
</dbReference>
<dbReference type="EMBL" id="BC128142">
    <property type="protein sequence ID" value="AAI28143.1"/>
    <property type="molecule type" value="mRNA"/>
</dbReference>
<dbReference type="EMBL" id="BC128143">
    <property type="protein sequence ID" value="AAI28144.1"/>
    <property type="molecule type" value="mRNA"/>
</dbReference>
<dbReference type="CCDS" id="CCDS93632.1">
    <molecule id="Q0P651-3"/>
</dbReference>
<dbReference type="RefSeq" id="NP_001034806.1">
    <molecule id="Q0P651-1"/>
    <property type="nucleotide sequence ID" value="NM_001039717.2"/>
</dbReference>
<dbReference type="RefSeq" id="NP_001352973.1">
    <molecule id="Q0P651-3"/>
    <property type="nucleotide sequence ID" value="NM_001366044.1"/>
</dbReference>
<dbReference type="RefSeq" id="NP_001352974.1">
    <molecule id="Q0P651-3"/>
    <property type="nucleotide sequence ID" value="NM_001366045.1"/>
</dbReference>
<dbReference type="RefSeq" id="NP_001352976.1">
    <molecule id="Q0P651-3"/>
    <property type="nucleotide sequence ID" value="NM_001366047.1"/>
</dbReference>
<dbReference type="RefSeq" id="NP_001352977.1">
    <molecule id="Q0P651-2"/>
    <property type="nucleotide sequence ID" value="NM_001366048.1"/>
</dbReference>
<dbReference type="RefSeq" id="NP_079373.2">
    <molecule id="Q0P651-4"/>
    <property type="nucleotide sequence ID" value="NM_025097.2"/>
</dbReference>
<dbReference type="BioGRID" id="123153">
    <property type="interactions" value="41"/>
</dbReference>
<dbReference type="FunCoup" id="Q0P651">
    <property type="interactions" value="581"/>
</dbReference>
<dbReference type="IntAct" id="Q0P651">
    <property type="interactions" value="31"/>
</dbReference>
<dbReference type="STRING" id="9606.ENSP00000496010"/>
<dbReference type="ESTHER" id="human-ABHD18">
    <property type="family name" value="ABHD18"/>
</dbReference>
<dbReference type="GlyCosmos" id="Q0P651">
    <property type="glycosylation" value="2 sites, No reported glycans"/>
</dbReference>
<dbReference type="GlyGen" id="Q0P651">
    <property type="glycosylation" value="2 sites"/>
</dbReference>
<dbReference type="iPTMnet" id="Q0P651"/>
<dbReference type="PhosphoSitePlus" id="Q0P651"/>
<dbReference type="BioMuta" id="ABHD18"/>
<dbReference type="DMDM" id="121940364"/>
<dbReference type="jPOST" id="Q0P651"/>
<dbReference type="MassIVE" id="Q0P651"/>
<dbReference type="PaxDb" id="9606-ENSP00000381937"/>
<dbReference type="PeptideAtlas" id="Q0P651"/>
<dbReference type="ProteomicsDB" id="58769">
    <molecule id="Q0P651-1"/>
</dbReference>
<dbReference type="ProteomicsDB" id="58770">
    <molecule id="Q0P651-2"/>
</dbReference>
<dbReference type="ProteomicsDB" id="58771">
    <molecule id="Q0P651-3"/>
</dbReference>
<dbReference type="ProteomicsDB" id="58772">
    <molecule id="Q0P651-4"/>
</dbReference>
<dbReference type="Pumba" id="Q0P651"/>
<dbReference type="Antibodypedia" id="64973">
    <property type="antibodies" value="82 antibodies from 17 providers"/>
</dbReference>
<dbReference type="Ensembl" id="ENST00000444616.5">
    <molecule id="Q0P651-1"/>
    <property type="protein sequence ID" value="ENSP00000397229.1"/>
    <property type="gene ID" value="ENSG00000164074.17"/>
</dbReference>
<dbReference type="GeneID" id="80167"/>
<dbReference type="UCSC" id="uc021xrt.2">
    <molecule id="Q0P651-1"/>
    <property type="organism name" value="human"/>
</dbReference>
<dbReference type="AGR" id="HGNC:26111"/>
<dbReference type="GeneCards" id="ABHD18"/>
<dbReference type="HGNC" id="HGNC:26111">
    <property type="gene designation" value="ABHD18"/>
</dbReference>
<dbReference type="HPA" id="ENSG00000164074">
    <property type="expression patterns" value="Low tissue specificity"/>
</dbReference>
<dbReference type="neXtProt" id="NX_Q0P651"/>
<dbReference type="OpenTargets" id="ENSG00000164074"/>
<dbReference type="PharmGKB" id="PA147358673"/>
<dbReference type="VEuPathDB" id="HostDB:ENSG00000164074"/>
<dbReference type="eggNOG" id="KOG1551">
    <property type="taxonomic scope" value="Eukaryota"/>
</dbReference>
<dbReference type="GeneTree" id="ENSGT00390000014635"/>
<dbReference type="HOGENOM" id="CLU_035640_0_0_1"/>
<dbReference type="InParanoid" id="Q0P651"/>
<dbReference type="OMA" id="MACLACT"/>
<dbReference type="OrthoDB" id="9987145at2759"/>
<dbReference type="PAN-GO" id="Q0P651">
    <property type="GO annotations" value="0 GO annotations based on evolutionary models"/>
</dbReference>
<dbReference type="PhylomeDB" id="Q0P651"/>
<dbReference type="TreeFam" id="TF314683"/>
<dbReference type="PathwayCommons" id="Q0P651"/>
<dbReference type="SignaLink" id="Q0P651"/>
<dbReference type="ChiTaRS" id="ABHD18">
    <property type="organism name" value="human"/>
</dbReference>
<dbReference type="Pharos" id="Q0P651">
    <property type="development level" value="Tdark"/>
</dbReference>
<dbReference type="PRO" id="PR:Q0P651"/>
<dbReference type="Proteomes" id="UP000005640">
    <property type="component" value="Chromosome 4"/>
</dbReference>
<dbReference type="RNAct" id="Q0P651">
    <property type="molecule type" value="protein"/>
</dbReference>
<dbReference type="Bgee" id="ENSG00000164074">
    <property type="expression patterns" value="Expressed in buccal mucosa cell and 189 other cell types or tissues"/>
</dbReference>
<dbReference type="ExpressionAtlas" id="Q0P651">
    <property type="expression patterns" value="baseline and differential"/>
</dbReference>
<dbReference type="GO" id="GO:0005576">
    <property type="term" value="C:extracellular region"/>
    <property type="evidence" value="ECO:0007669"/>
    <property type="project" value="UniProtKB-SubCell"/>
</dbReference>
<dbReference type="GO" id="GO:0005739">
    <property type="term" value="C:mitochondrion"/>
    <property type="evidence" value="ECO:0006056"/>
    <property type="project" value="FlyBase"/>
</dbReference>
<dbReference type="Gene3D" id="3.40.50.1820">
    <property type="entry name" value="alpha/beta hydrolase"/>
    <property type="match status" value="1"/>
</dbReference>
<dbReference type="InterPro" id="IPR029058">
    <property type="entry name" value="AB_hydrolase_fold"/>
</dbReference>
<dbReference type="InterPro" id="IPR019149">
    <property type="entry name" value="ABHD18"/>
</dbReference>
<dbReference type="PANTHER" id="PTHR13617">
    <property type="entry name" value="PROTEIN ABHD18"/>
    <property type="match status" value="1"/>
</dbReference>
<dbReference type="PANTHER" id="PTHR13617:SF14">
    <property type="entry name" value="PROTEIN ABHD18"/>
    <property type="match status" value="1"/>
</dbReference>
<dbReference type="Pfam" id="PF09752">
    <property type="entry name" value="ABHD18"/>
    <property type="match status" value="1"/>
</dbReference>
<dbReference type="SUPFAM" id="SSF53474">
    <property type="entry name" value="alpha/beta-Hydrolases"/>
    <property type="match status" value="1"/>
</dbReference>
<name>ABD18_HUMAN</name>
<keyword id="KW-0025">Alternative splicing</keyword>
<keyword id="KW-0325">Glycoprotein</keyword>
<keyword id="KW-1267">Proteomics identification</keyword>
<keyword id="KW-1185">Reference proteome</keyword>
<keyword id="KW-0964">Secreted</keyword>
<keyword id="KW-0732">Signal</keyword>